<sequence>MPRVPATLYACLLGLCALVPRLAGLNICTSGSATSCEECLLIHPKCAWCSKEYFGNPRSITSRCDLKANLIRNGCEGEIESPASSTHVLRNLPLSSKGSSATGSDVIQMTPQEIAVSLRPGEQTTFQLQVRQVEDYPVDLYYLMDLSLSMKDDLENIRSLGTKLAEEMRKLTSNFRLGFGSFVDKDISPFSYTAPRYQTNPCIGYKLFPNCVPSFGFRHLLPLTDRVDSFNEEVRKQRVSRNRDAPEGGFDAVLQAAVCKEKIGWRKDALHLLVFTTDDVPHIALDGKLGGLVQPHDGQCHLNEANEYTASNQMDYPSLALLGEKLAENNINLIFAVTKNHYMLYKNFTALIPGTTVEILHGDSKNIIQLIINAYSSIRAKVELSVWDQPEDLNLFFTATCQDGISYPGQRKCEGLKIGDTASFEVSVEARSCPGRQAAQSFTLRPVGFRDSLQVEVAYNCTCGCSTGLEPNSARCSGNGTYTCGLCECDPGYLGTRCECQEGENQSGYQNLCREAEGKPLCSGRGECSCNQCSCFESEFGRIYGPFCECDSFSCARNKGVLCSGHGECHCGECKCHAGYIGDNCNCSTDVSTCKAKDGQICSDRGRCVCGQCQCTEPGAFGETCEKCPTCPDACSSKRDCVECLLLHQGKPDNQTCHHQCKDEVITWVDTIVKDDQEAVLCFYKTAKDCVMMFSYTELPNGRSNLTVLREPECGSAPNAMTILLAVVGSILLIGMALLAIWKLLVTIHDRREFAKFQSERSRARYEMASNPLYRKPISTHTVDFAFNKFNKSYNGSV</sequence>
<organism>
    <name type="scientific">Mus musculus</name>
    <name type="common">Mouse</name>
    <dbReference type="NCBI Taxonomy" id="10090"/>
    <lineage>
        <taxon>Eukaryota</taxon>
        <taxon>Metazoa</taxon>
        <taxon>Chordata</taxon>
        <taxon>Craniata</taxon>
        <taxon>Vertebrata</taxon>
        <taxon>Euteleostomi</taxon>
        <taxon>Mammalia</taxon>
        <taxon>Eutheria</taxon>
        <taxon>Euarchontoglires</taxon>
        <taxon>Glires</taxon>
        <taxon>Rodentia</taxon>
        <taxon>Myomorpha</taxon>
        <taxon>Muroidea</taxon>
        <taxon>Muridae</taxon>
        <taxon>Murinae</taxon>
        <taxon>Mus</taxon>
        <taxon>Mus</taxon>
    </lineage>
</organism>
<reference key="1">
    <citation type="journal article" date="1998" name="Biochem. J.">
        <title>cDNA cloning reveals two mouse beta5 integrin transcripts distinct in cytoplasmic domains as a result of alternative splicing.</title>
        <authorList>
            <person name="Zhang H."/>
            <person name="Tan S.M."/>
            <person name="Lu J."/>
        </authorList>
    </citation>
    <scope>NUCLEOTIDE SEQUENCE [MRNA] (ISOFORMS BETA-5A AND BETA-5B)</scope>
    <source>
        <tissue>Liver</tissue>
    </source>
</reference>
<reference key="2">
    <citation type="journal article" date="1999" name="J. Biol. Chem.">
        <title>Cloning of the murine beta5 integrin subunit promoter. Identification of a novel sequence mediating granulocyte-macrophage colony-stimulating factor-dependent repression of beta5 integrin gene transcription.</title>
        <authorList>
            <person name="Feng X."/>
            <person name="Teitelbaum S.L."/>
            <person name="Quiroz M.E."/>
            <person name="Towler D.A."/>
            <person name="Ross F.P."/>
        </authorList>
    </citation>
    <scope>NUCLEOTIDE SEQUENCE [MRNA] (ISOFORM BETA-5A)</scope>
    <source>
        <tissue>Brain</tissue>
    </source>
</reference>
<reference key="3">
    <citation type="journal article" date="2002" name="Nature">
        <title>Fibulin-5/DANCE is essential for elastogenesis in vivo.</title>
        <authorList>
            <person name="Nakamura T."/>
            <person name="Lozano P.R."/>
            <person name="Ikeda Y."/>
            <person name="Iwanaga Y."/>
            <person name="Hinek A."/>
            <person name="Minamisawa S."/>
            <person name="Cheng C.F."/>
            <person name="Kobuke K."/>
            <person name="Dalton N."/>
            <person name="Takada Y."/>
            <person name="Tashiro K."/>
            <person name="Ross J."/>
            <person name="Honjo T."/>
            <person name="Chien K.R."/>
        </authorList>
    </citation>
    <scope>INTERACTION WITH FBLN5</scope>
</reference>
<reference key="4">
    <citation type="journal article" date="2003" name="Proc. Natl. Acad. Sci. U.S.A.">
        <title>Integrin beta cytoplasmic domain interactions with phosphotyrosine-binding domains: a structural prototype for diversity in integrin signaling.</title>
        <authorList>
            <person name="Calderwood D.A."/>
            <person name="Fujioka Y."/>
            <person name="de Pereda J.M."/>
            <person name="Garcia-Alvarez B."/>
            <person name="Nakamoto T."/>
            <person name="Margolis B."/>
            <person name="McGlade C.J."/>
            <person name="Liddington R.C."/>
            <person name="Ginsberg M.H."/>
        </authorList>
    </citation>
    <scope>INTERACTION WITH DAB2</scope>
</reference>
<reference key="5">
    <citation type="journal article" date="2010" name="Cell">
        <title>A tissue-specific atlas of mouse protein phosphorylation and expression.</title>
        <authorList>
            <person name="Huttlin E.L."/>
            <person name="Jedrychowski M.P."/>
            <person name="Elias J.E."/>
            <person name="Goswami T."/>
            <person name="Rad R."/>
            <person name="Beausoleil S.A."/>
            <person name="Villen J."/>
            <person name="Haas W."/>
            <person name="Sowa M.E."/>
            <person name="Gygi S.P."/>
        </authorList>
    </citation>
    <scope>IDENTIFICATION BY MASS SPECTROMETRY [LARGE SCALE ANALYSIS]</scope>
    <source>
        <tissue>Kidney</tissue>
        <tissue>Lung</tissue>
        <tissue>Testis</tissue>
    </source>
</reference>
<name>ITB5_MOUSE</name>
<comment type="function">
    <text>Integrin alpha-V/beta-5 (ITGAV:ITGB5) is a receptor for fibronectin. It recognizes the sequence R-G-D in its ligand.</text>
</comment>
<comment type="subunit">
    <text evidence="2 5 6 9">Heterodimer of an alpha and a beta subunit. Beta-5 (ITGB5) associates with alpha-V (ITGAV) (Probable). Interacts with MYO10 (By similarity). Interacts with DAB2. Integrin ITGAV:ITGB5 interacts with FBLN5 (via N-terminus) (PubMed:11805835). ITGAV:ITGB5 interacts with CCN3 (By similarity). Interacts with tensin TNS3; TNS3 also interacts with PEAK1, thus acting as an adapter molecule to bridge the association of PEAK1 with ITGB5 (By similarity).</text>
</comment>
<comment type="interaction">
    <interactant intactId="EBI-8401821">
        <id>O70309</id>
    </interactant>
    <interactant intactId="EBI-1149557">
        <id>P97479</id>
        <label>Myo7a</label>
    </interactant>
    <organismsDiffer>false</organismsDiffer>
    <experiments>3</experiments>
</comment>
<comment type="subcellular location">
    <subcellularLocation>
        <location>Cell membrane</location>
        <topology>Single-pass type I membrane protein</topology>
    </subcellularLocation>
</comment>
<comment type="alternative products">
    <event type="alternative splicing"/>
    <isoform>
        <id>O70309-1</id>
        <name>Beta-5A</name>
        <sequence type="displayed"/>
    </isoform>
    <isoform>
        <id>O70309-2</id>
        <name>Beta-5B</name>
        <sequence type="described" ref="VSP_002752"/>
    </isoform>
</comment>
<comment type="domain">
    <text evidence="1">The VWFA domain (or beta I domain) contains three cation-binding sites: the ligand-associated metal ion-binding site (LIMBS or SyMBS), the metal ion-dependent adhesion site (MIDAS), and the adjacent MIDAS site (ADMIDAS). This domain is also part of the ligand-binding site.</text>
</comment>
<comment type="similarity">
    <text evidence="8">Belongs to the integrin beta chain family.</text>
</comment>
<dbReference type="EMBL" id="AF043257">
    <property type="protein sequence ID" value="AAC40110.1"/>
    <property type="molecule type" value="mRNA"/>
</dbReference>
<dbReference type="EMBL" id="AF043256">
    <property type="protein sequence ID" value="AAC40109.1"/>
    <property type="molecule type" value="mRNA"/>
</dbReference>
<dbReference type="EMBL" id="AF022110">
    <property type="protein sequence ID" value="AAD08782.1"/>
    <property type="molecule type" value="mRNA"/>
</dbReference>
<dbReference type="CCDS" id="CCDS28135.1">
    <molecule id="O70309-2"/>
</dbReference>
<dbReference type="RefSeq" id="NP_001139356.1">
    <property type="nucleotide sequence ID" value="NM_001145884.1"/>
</dbReference>
<dbReference type="RefSeq" id="NP_034710.2">
    <property type="nucleotide sequence ID" value="NM_010580.2"/>
</dbReference>
<dbReference type="SMR" id="O70309"/>
<dbReference type="BioGRID" id="200832">
    <property type="interactions" value="12"/>
</dbReference>
<dbReference type="ComplexPortal" id="CPX-3131">
    <property type="entry name" value="Integrin alphav-beta5 complex"/>
</dbReference>
<dbReference type="FunCoup" id="O70309">
    <property type="interactions" value="520"/>
</dbReference>
<dbReference type="IntAct" id="O70309">
    <property type="interactions" value="1"/>
</dbReference>
<dbReference type="MINT" id="O70309"/>
<dbReference type="STRING" id="10090.ENSMUSP00000069416"/>
<dbReference type="ChEMBL" id="CHEMBL4523628"/>
<dbReference type="GlyConnect" id="2406">
    <property type="glycosylation" value="1 N-Linked glycan (1 site)"/>
</dbReference>
<dbReference type="GlyCosmos" id="O70309">
    <property type="glycosylation" value="7 sites, 1 glycan"/>
</dbReference>
<dbReference type="GlyGen" id="O70309">
    <property type="glycosylation" value="8 sites, 5 N-linked glycans (5 sites), 1 O-linked glycan (1 site)"/>
</dbReference>
<dbReference type="iPTMnet" id="O70309"/>
<dbReference type="PhosphoSitePlus" id="O70309"/>
<dbReference type="jPOST" id="O70309"/>
<dbReference type="PaxDb" id="10090-ENSMUSP00000069416"/>
<dbReference type="PeptideAtlas" id="O70309"/>
<dbReference type="ProteomicsDB" id="268900">
    <molecule id="O70309-1"/>
</dbReference>
<dbReference type="ProteomicsDB" id="268901">
    <molecule id="O70309-2"/>
</dbReference>
<dbReference type="Pumba" id="O70309"/>
<dbReference type="DNASU" id="16419"/>
<dbReference type="GeneID" id="16419"/>
<dbReference type="KEGG" id="mmu:16419"/>
<dbReference type="AGR" id="MGI:96614"/>
<dbReference type="CTD" id="3693"/>
<dbReference type="MGI" id="MGI:96614">
    <property type="gene designation" value="Itgb5"/>
</dbReference>
<dbReference type="eggNOG" id="KOG1226">
    <property type="taxonomic scope" value="Eukaryota"/>
</dbReference>
<dbReference type="InParanoid" id="O70309"/>
<dbReference type="OrthoDB" id="410592at2759"/>
<dbReference type="Reactome" id="R-MMU-1236973">
    <property type="pathway name" value="Cross-presentation of particulate exogenous antigens (phagosomes)"/>
</dbReference>
<dbReference type="Reactome" id="R-MMU-2129379">
    <property type="pathway name" value="Molecules associated with elastic fibres"/>
</dbReference>
<dbReference type="Reactome" id="R-MMU-216083">
    <property type="pathway name" value="Integrin cell surface interactions"/>
</dbReference>
<dbReference type="Reactome" id="R-MMU-2173789">
    <property type="pathway name" value="TGF-beta receptor signaling activates SMADs"/>
</dbReference>
<dbReference type="Reactome" id="R-MMU-3000170">
    <property type="pathway name" value="Syndecan interactions"/>
</dbReference>
<dbReference type="Reactome" id="R-MMU-3000178">
    <property type="pathway name" value="ECM proteoglycans"/>
</dbReference>
<dbReference type="Reactome" id="R-MMU-445355">
    <property type="pathway name" value="Smooth Muscle Contraction"/>
</dbReference>
<dbReference type="BioGRID-ORCS" id="16419">
    <property type="hits" value="13 hits in 79 CRISPR screens"/>
</dbReference>
<dbReference type="ChiTaRS" id="Itgb5">
    <property type="organism name" value="mouse"/>
</dbReference>
<dbReference type="PRO" id="PR:O70309"/>
<dbReference type="Proteomes" id="UP000000589">
    <property type="component" value="Unplaced"/>
</dbReference>
<dbReference type="RNAct" id="O70309">
    <property type="molecule type" value="protein"/>
</dbReference>
<dbReference type="GO" id="GO:0031252">
    <property type="term" value="C:cell leading edge"/>
    <property type="evidence" value="ECO:0000314"/>
    <property type="project" value="MGI"/>
</dbReference>
<dbReference type="GO" id="GO:0005925">
    <property type="term" value="C:focal adhesion"/>
    <property type="evidence" value="ECO:0000314"/>
    <property type="project" value="MGI"/>
</dbReference>
<dbReference type="GO" id="GO:0098978">
    <property type="term" value="C:glutamatergic synapse"/>
    <property type="evidence" value="ECO:0000314"/>
    <property type="project" value="SynGO"/>
</dbReference>
<dbReference type="GO" id="GO:0034684">
    <property type="term" value="C:integrin alphav-beta5 complex"/>
    <property type="evidence" value="ECO:0000314"/>
    <property type="project" value="BHF-UCL"/>
</dbReference>
<dbReference type="GO" id="GO:0005886">
    <property type="term" value="C:plasma membrane"/>
    <property type="evidence" value="ECO:0000304"/>
    <property type="project" value="Reactome"/>
</dbReference>
<dbReference type="GO" id="GO:0043235">
    <property type="term" value="C:receptor complex"/>
    <property type="evidence" value="ECO:0000266"/>
    <property type="project" value="MGI"/>
</dbReference>
<dbReference type="GO" id="GO:0097060">
    <property type="term" value="C:synaptic membrane"/>
    <property type="evidence" value="ECO:0000314"/>
    <property type="project" value="SynGO"/>
</dbReference>
<dbReference type="GO" id="GO:0005178">
    <property type="term" value="F:integrin binding"/>
    <property type="evidence" value="ECO:0000353"/>
    <property type="project" value="BHF-UCL"/>
</dbReference>
<dbReference type="GO" id="GO:0046872">
    <property type="term" value="F:metal ion binding"/>
    <property type="evidence" value="ECO:0007669"/>
    <property type="project" value="UniProtKB-KW"/>
</dbReference>
<dbReference type="GO" id="GO:0007160">
    <property type="term" value="P:cell-matrix adhesion"/>
    <property type="evidence" value="ECO:0000303"/>
    <property type="project" value="ComplexPortal"/>
</dbReference>
<dbReference type="GO" id="GO:0007229">
    <property type="term" value="P:integrin-mediated signaling pathway"/>
    <property type="evidence" value="ECO:0000315"/>
    <property type="project" value="UniProtKB"/>
</dbReference>
<dbReference type="GO" id="GO:0043149">
    <property type="term" value="P:stress fiber assembly"/>
    <property type="evidence" value="ECO:0000315"/>
    <property type="project" value="UniProtKB"/>
</dbReference>
<dbReference type="GO" id="GO:0007179">
    <property type="term" value="P:transforming growth factor beta receptor signaling pathway"/>
    <property type="evidence" value="ECO:0000315"/>
    <property type="project" value="UniProtKB"/>
</dbReference>
<dbReference type="GO" id="GO:0035313">
    <property type="term" value="P:wound healing, spreading of epidermal cells"/>
    <property type="evidence" value="ECO:0000303"/>
    <property type="project" value="ComplexPortal"/>
</dbReference>
<dbReference type="FunFam" id="1.20.5.100:FF:000006">
    <property type="entry name" value="Integrin beta"/>
    <property type="match status" value="1"/>
</dbReference>
<dbReference type="FunFam" id="2.10.25.10:FF:000043">
    <property type="entry name" value="Integrin beta"/>
    <property type="match status" value="1"/>
</dbReference>
<dbReference type="FunFam" id="2.10.25.10:FF:000075">
    <property type="entry name" value="Integrin beta"/>
    <property type="match status" value="1"/>
</dbReference>
<dbReference type="FunFam" id="2.10.25.10:FF:000258">
    <property type="entry name" value="Integrin beta"/>
    <property type="match status" value="1"/>
</dbReference>
<dbReference type="FunFam" id="2.60.40.1510:FF:000021">
    <property type="entry name" value="Integrin beta"/>
    <property type="match status" value="1"/>
</dbReference>
<dbReference type="FunFam" id="3.30.1680.10:FF:000002">
    <property type="entry name" value="Integrin beta"/>
    <property type="match status" value="1"/>
</dbReference>
<dbReference type="FunFam" id="3.40.50.410:FF:000002">
    <property type="entry name" value="Integrin beta"/>
    <property type="match status" value="1"/>
</dbReference>
<dbReference type="FunFam" id="4.10.1240.30:FF:000001">
    <property type="entry name" value="Integrin beta"/>
    <property type="match status" value="1"/>
</dbReference>
<dbReference type="Gene3D" id="4.10.1240.30">
    <property type="match status" value="1"/>
</dbReference>
<dbReference type="Gene3D" id="1.20.5.100">
    <property type="entry name" value="Cytochrome c1, transmembrane anchor, C-terminal"/>
    <property type="match status" value="1"/>
</dbReference>
<dbReference type="Gene3D" id="2.10.25.10">
    <property type="entry name" value="Laminin"/>
    <property type="match status" value="4"/>
</dbReference>
<dbReference type="Gene3D" id="3.30.1680.10">
    <property type="entry name" value="ligand-binding face of the semaphorins, domain 2"/>
    <property type="match status" value="1"/>
</dbReference>
<dbReference type="Gene3D" id="2.60.40.1510">
    <property type="entry name" value="ntegrin, alpha v. Chain A, domain 3"/>
    <property type="match status" value="1"/>
</dbReference>
<dbReference type="Gene3D" id="3.40.50.410">
    <property type="entry name" value="von Willebrand factor, type A domain"/>
    <property type="match status" value="1"/>
</dbReference>
<dbReference type="InterPro" id="IPR013111">
    <property type="entry name" value="EGF_extracell"/>
</dbReference>
<dbReference type="InterPro" id="IPR040622">
    <property type="entry name" value="I-EGF_1"/>
</dbReference>
<dbReference type="InterPro" id="IPR033760">
    <property type="entry name" value="Integrin_beta_N"/>
</dbReference>
<dbReference type="InterPro" id="IPR015812">
    <property type="entry name" value="Integrin_bsu"/>
</dbReference>
<dbReference type="InterPro" id="IPR014836">
    <property type="entry name" value="Integrin_bsu_cyt_dom"/>
</dbReference>
<dbReference type="InterPro" id="IPR012896">
    <property type="entry name" value="Integrin_bsu_tail"/>
</dbReference>
<dbReference type="InterPro" id="IPR036349">
    <property type="entry name" value="Integrin_bsu_tail_dom_sf"/>
</dbReference>
<dbReference type="InterPro" id="IPR002369">
    <property type="entry name" value="Integrin_bsu_VWA"/>
</dbReference>
<dbReference type="InterPro" id="IPR032695">
    <property type="entry name" value="Integrin_dom_sf"/>
</dbReference>
<dbReference type="InterPro" id="IPR016201">
    <property type="entry name" value="PSI"/>
</dbReference>
<dbReference type="InterPro" id="IPR002035">
    <property type="entry name" value="VWF_A"/>
</dbReference>
<dbReference type="InterPro" id="IPR036465">
    <property type="entry name" value="vWFA_dom_sf"/>
</dbReference>
<dbReference type="PANTHER" id="PTHR10082">
    <property type="entry name" value="INTEGRIN BETA SUBUNIT"/>
    <property type="match status" value="1"/>
</dbReference>
<dbReference type="PANTHER" id="PTHR10082:SF26">
    <property type="entry name" value="INTEGRIN BETA-5"/>
    <property type="match status" value="1"/>
</dbReference>
<dbReference type="Pfam" id="PF07974">
    <property type="entry name" value="EGF_2"/>
    <property type="match status" value="1"/>
</dbReference>
<dbReference type="Pfam" id="PF23105">
    <property type="entry name" value="EGF_integrin"/>
    <property type="match status" value="1"/>
</dbReference>
<dbReference type="Pfam" id="PF18372">
    <property type="entry name" value="I-EGF_1"/>
    <property type="match status" value="1"/>
</dbReference>
<dbReference type="Pfam" id="PF08725">
    <property type="entry name" value="Integrin_b_cyt"/>
    <property type="match status" value="1"/>
</dbReference>
<dbReference type="Pfam" id="PF07965">
    <property type="entry name" value="Integrin_B_tail"/>
    <property type="match status" value="1"/>
</dbReference>
<dbReference type="Pfam" id="PF00362">
    <property type="entry name" value="Integrin_beta"/>
    <property type="match status" value="1"/>
</dbReference>
<dbReference type="Pfam" id="PF17205">
    <property type="entry name" value="PSI_integrin"/>
    <property type="match status" value="1"/>
</dbReference>
<dbReference type="PIRSF" id="PIRSF002512">
    <property type="entry name" value="Integrin_B"/>
    <property type="match status" value="1"/>
</dbReference>
<dbReference type="PRINTS" id="PR01186">
    <property type="entry name" value="INTEGRINB"/>
</dbReference>
<dbReference type="SMART" id="SM00187">
    <property type="entry name" value="INB"/>
    <property type="match status" value="1"/>
</dbReference>
<dbReference type="SMART" id="SM01241">
    <property type="entry name" value="Integrin_b_cyt"/>
    <property type="match status" value="1"/>
</dbReference>
<dbReference type="SMART" id="SM01242">
    <property type="entry name" value="Integrin_B_tail"/>
    <property type="match status" value="1"/>
</dbReference>
<dbReference type="SMART" id="SM00423">
    <property type="entry name" value="PSI"/>
    <property type="match status" value="1"/>
</dbReference>
<dbReference type="SMART" id="SM00327">
    <property type="entry name" value="VWA"/>
    <property type="match status" value="1"/>
</dbReference>
<dbReference type="SUPFAM" id="SSF57196">
    <property type="entry name" value="EGF/Laminin"/>
    <property type="match status" value="2"/>
</dbReference>
<dbReference type="SUPFAM" id="SSF69687">
    <property type="entry name" value="Integrin beta tail domain"/>
    <property type="match status" value="1"/>
</dbReference>
<dbReference type="SUPFAM" id="SSF69179">
    <property type="entry name" value="Integrin domains"/>
    <property type="match status" value="1"/>
</dbReference>
<dbReference type="SUPFAM" id="SSF103575">
    <property type="entry name" value="Plexin repeat"/>
    <property type="match status" value="1"/>
</dbReference>
<dbReference type="SUPFAM" id="SSF53300">
    <property type="entry name" value="vWA-like"/>
    <property type="match status" value="1"/>
</dbReference>
<dbReference type="PROSITE" id="PS00022">
    <property type="entry name" value="EGF_1"/>
    <property type="match status" value="2"/>
</dbReference>
<dbReference type="PROSITE" id="PS01186">
    <property type="entry name" value="EGF_2"/>
    <property type="match status" value="2"/>
</dbReference>
<dbReference type="PROSITE" id="PS00243">
    <property type="entry name" value="I_EGF_1"/>
    <property type="match status" value="2"/>
</dbReference>
<dbReference type="PROSITE" id="PS52047">
    <property type="entry name" value="I_EGF_2"/>
    <property type="match status" value="4"/>
</dbReference>
<protein>
    <recommendedName>
        <fullName>Integrin beta-5</fullName>
    </recommendedName>
</protein>
<evidence type="ECO:0000250" key="1">
    <source>
        <dbReference type="UniProtKB" id="P05106"/>
    </source>
</evidence>
<evidence type="ECO:0000250" key="2">
    <source>
        <dbReference type="UniProtKB" id="P18084"/>
    </source>
</evidence>
<evidence type="ECO:0000255" key="3"/>
<evidence type="ECO:0000255" key="4">
    <source>
        <dbReference type="PROSITE-ProRule" id="PRU01392"/>
    </source>
</evidence>
<evidence type="ECO:0000269" key="5">
    <source>
    </source>
</evidence>
<evidence type="ECO:0000269" key="6">
    <source>
    </source>
</evidence>
<evidence type="ECO:0000303" key="7">
    <source>
    </source>
</evidence>
<evidence type="ECO:0000305" key="8"/>
<evidence type="ECO:0000305" key="9">
    <source>
    </source>
</evidence>
<gene>
    <name type="primary">Itgb5</name>
</gene>
<accession>O70309</accession>
<accession>O70308</accession>
<accession>O88347</accession>
<feature type="signal peptide" evidence="3">
    <location>
        <begin position="1"/>
        <end position="23"/>
    </location>
</feature>
<feature type="chain" id="PRO_0000016349" description="Integrin beta-5">
    <location>
        <begin position="24"/>
        <end position="798"/>
    </location>
</feature>
<feature type="topological domain" description="Extracellular" evidence="3">
    <location>
        <begin position="24"/>
        <end position="719"/>
    </location>
</feature>
<feature type="transmembrane region" description="Helical" evidence="3">
    <location>
        <begin position="720"/>
        <end position="742"/>
    </location>
</feature>
<feature type="topological domain" description="Cytoplasmic" evidence="3">
    <location>
        <begin position="743"/>
        <end position="798"/>
    </location>
</feature>
<feature type="domain" description="PSI" evidence="3">
    <location>
        <begin position="27"/>
        <end position="76"/>
    </location>
</feature>
<feature type="domain" description="VWFA" evidence="1">
    <location>
        <begin position="136"/>
        <end position="378"/>
    </location>
</feature>
<feature type="domain" description="I-EGF 1" evidence="4">
    <location>
        <begin position="465"/>
        <end position="499"/>
    </location>
</feature>
<feature type="domain" description="I-EGF 2" evidence="4">
    <location>
        <begin position="500"/>
        <end position="549"/>
    </location>
</feature>
<feature type="domain" description="I-EGF 3" evidence="4">
    <location>
        <begin position="550"/>
        <end position="586"/>
    </location>
</feature>
<feature type="domain" description="I-EGF 4" evidence="4">
    <location>
        <begin position="587"/>
        <end position="626"/>
    </location>
</feature>
<feature type="binding site" description="in MIDAS binding site" evidence="1">
    <location>
        <position position="147"/>
    </location>
    <ligand>
        <name>Mg(2+)</name>
        <dbReference type="ChEBI" id="CHEBI:18420"/>
    </ligand>
</feature>
<feature type="binding site" description="in ADMIDAS binding site" evidence="1">
    <location>
        <position position="149"/>
    </location>
    <ligand>
        <name>Ca(2+)</name>
        <dbReference type="ChEBI" id="CHEBI:29108"/>
        <label>1</label>
    </ligand>
</feature>
<feature type="binding site" description="in MIDAS binding site" evidence="1">
    <location>
        <position position="149"/>
    </location>
    <ligand>
        <name>Mg(2+)</name>
        <dbReference type="ChEBI" id="CHEBI:18420"/>
    </ligand>
</feature>
<feature type="binding site" description="in ADMIDAS binding site" evidence="1">
    <location>
        <position position="152"/>
    </location>
    <ligand>
        <name>Ca(2+)</name>
        <dbReference type="ChEBI" id="CHEBI:29108"/>
        <label>1</label>
    </ligand>
</feature>
<feature type="binding site" description="in ADMIDAS binding site" evidence="1">
    <location>
        <position position="153"/>
    </location>
    <ligand>
        <name>Ca(2+)</name>
        <dbReference type="ChEBI" id="CHEBI:29108"/>
        <label>1</label>
    </ligand>
</feature>
<feature type="binding site" description="in LIMBS binding site" evidence="1">
    <location>
        <position position="184"/>
    </location>
    <ligand>
        <name>Ca(2+)</name>
        <dbReference type="ChEBI" id="CHEBI:29108"/>
        <label>2</label>
    </ligand>
</feature>
<feature type="binding site" description="in LIMBS binding site" evidence="1">
    <location>
        <position position="242"/>
    </location>
    <ligand>
        <name>Ca(2+)</name>
        <dbReference type="ChEBI" id="CHEBI:29108"/>
        <label>2</label>
    </ligand>
</feature>
<feature type="binding site" description="in LIMBS binding site" evidence="1">
    <location>
        <position position="244"/>
    </location>
    <ligand>
        <name>Ca(2+)</name>
        <dbReference type="ChEBI" id="CHEBI:29108"/>
        <label>2</label>
    </ligand>
</feature>
<feature type="binding site" description="in LIMBS binding site" evidence="1">
    <location>
        <position position="246"/>
    </location>
    <ligand>
        <name>Ca(2+)</name>
        <dbReference type="ChEBI" id="CHEBI:29108"/>
        <label>2</label>
    </ligand>
</feature>
<feature type="binding site" description="in LIMBS binding site" evidence="1">
    <location>
        <position position="247"/>
    </location>
    <ligand>
        <name>Ca(2+)</name>
        <dbReference type="ChEBI" id="CHEBI:29108"/>
        <label>2</label>
    </ligand>
</feature>
<feature type="binding site" description="in MIDAS binding site" evidence="1">
    <location>
        <position position="247"/>
    </location>
    <ligand>
        <name>Mg(2+)</name>
        <dbReference type="ChEBI" id="CHEBI:18420"/>
    </ligand>
</feature>
<feature type="binding site" description="in ADMIDAS binding site" evidence="1">
    <location>
        <position position="362"/>
    </location>
    <ligand>
        <name>Ca(2+)</name>
        <dbReference type="ChEBI" id="CHEBI:29108"/>
        <label>1</label>
    </ligand>
</feature>
<feature type="modified residue" description="Phosphoserine" evidence="2">
    <location>
        <position position="770"/>
    </location>
</feature>
<feature type="glycosylation site" description="N-linked (GlcNAc...) asparagine" evidence="3">
    <location>
        <position position="347"/>
    </location>
</feature>
<feature type="glycosylation site" description="N-linked (GlcNAc...) asparagine" evidence="3">
    <location>
        <position position="460"/>
    </location>
</feature>
<feature type="glycosylation site" description="N-linked (GlcNAc...) asparagine" evidence="3">
    <location>
        <position position="479"/>
    </location>
</feature>
<feature type="glycosylation site" description="N-linked (GlcNAc...) asparagine" evidence="3">
    <location>
        <position position="505"/>
    </location>
</feature>
<feature type="glycosylation site" description="N-linked (GlcNAc...) asparagine" evidence="3">
    <location>
        <position position="586"/>
    </location>
</feature>
<feature type="glycosylation site" description="N-linked (GlcNAc...) asparagine" evidence="3">
    <location>
        <position position="654"/>
    </location>
</feature>
<feature type="glycosylation site" description="N-linked (GlcNAc...) asparagine" evidence="3">
    <location>
        <position position="705"/>
    </location>
</feature>
<feature type="disulfide bond" evidence="1">
    <location>
        <begin position="28"/>
        <end position="46"/>
    </location>
</feature>
<feature type="disulfide bond" evidence="1">
    <location>
        <begin position="36"/>
        <end position="463"/>
    </location>
</feature>
<feature type="disulfide bond" evidence="1">
    <location>
        <begin position="39"/>
        <end position="64"/>
    </location>
</feature>
<feature type="disulfide bond" evidence="1">
    <location>
        <begin position="49"/>
        <end position="75"/>
    </location>
</feature>
<feature type="disulfide bond" evidence="1">
    <location>
        <begin position="202"/>
        <end position="211"/>
    </location>
</feature>
<feature type="disulfide bond" evidence="1">
    <location>
        <begin position="259"/>
        <end position="300"/>
    </location>
</feature>
<feature type="disulfide bond" evidence="1">
    <location>
        <begin position="401"/>
        <end position="413"/>
    </location>
</feature>
<feature type="disulfide bond" evidence="1">
    <location>
        <begin position="433"/>
        <end position="461"/>
    </location>
</feature>
<feature type="disulfide bond" evidence="4">
    <location>
        <begin position="465"/>
        <end position="484"/>
    </location>
</feature>
<feature type="disulfide bond" evidence="4">
    <location>
        <begin position="476"/>
        <end position="487"/>
    </location>
</feature>
<feature type="disulfide bond" evidence="4">
    <location>
        <begin position="489"/>
        <end position="498"/>
    </location>
</feature>
<feature type="disulfide bond" evidence="4">
    <location>
        <begin position="500"/>
        <end position="530"/>
    </location>
</feature>
<feature type="disulfide bond" evidence="4">
    <location>
        <begin position="513"/>
        <end position="528"/>
    </location>
</feature>
<feature type="disulfide bond" evidence="4">
    <location>
        <begin position="522"/>
        <end position="533"/>
    </location>
</feature>
<feature type="disulfide bond" evidence="4">
    <location>
        <begin position="535"/>
        <end position="548"/>
    </location>
</feature>
<feature type="disulfide bond" evidence="4">
    <location>
        <begin position="550"/>
        <end position="571"/>
    </location>
</feature>
<feature type="disulfide bond" evidence="4">
    <location>
        <begin position="555"/>
        <end position="569"/>
    </location>
</feature>
<feature type="disulfide bond" evidence="4">
    <location>
        <begin position="563"/>
        <end position="574"/>
    </location>
</feature>
<feature type="disulfide bond" evidence="4">
    <location>
        <begin position="576"/>
        <end position="585"/>
    </location>
</feature>
<feature type="disulfide bond" evidence="4">
    <location>
        <begin position="587"/>
        <end position="610"/>
    </location>
</feature>
<feature type="disulfide bond" evidence="4">
    <location>
        <begin position="594"/>
        <end position="608"/>
    </location>
</feature>
<feature type="disulfide bond" evidence="4">
    <location>
        <begin position="602"/>
        <end position="613"/>
    </location>
</feature>
<feature type="disulfide bond" evidence="4">
    <location>
        <begin position="615"/>
        <end position="625"/>
    </location>
</feature>
<feature type="disulfide bond" evidence="1">
    <location>
        <begin position="628"/>
        <end position="631"/>
    </location>
</feature>
<feature type="disulfide bond" evidence="1">
    <location>
        <begin position="635"/>
        <end position="682"/>
    </location>
</feature>
<feature type="disulfide bond" evidence="1">
    <location>
        <begin position="641"/>
        <end position="661"/>
    </location>
</feature>
<feature type="disulfide bond" evidence="1">
    <location>
        <begin position="644"/>
        <end position="657"/>
    </location>
</feature>
<feature type="disulfide bond" evidence="1">
    <location>
        <begin position="690"/>
        <end position="714"/>
    </location>
</feature>
<feature type="splice variant" id="VSP_002752" description="In isoform Beta-5B." evidence="7">
    <original>ERSRARYEMASNPLYRKPISTHTVDFAFNKFNKSYNGSV</original>
    <variation>LKPPVQKAHLHTHCRFRLQQVQQILQWLSGLRLLDGWRGTKDEDSGVPWTSWTICSR</variation>
    <location>
        <begin position="760"/>
        <end position="798"/>
    </location>
</feature>
<feature type="sequence conflict" description="In Ref. 2; AAD08782." evidence="8" ref="2">
    <original>S</original>
    <variation>C</variation>
    <location>
        <position position="96"/>
    </location>
</feature>
<feature type="sequence conflict" description="In Ref. 2; AAD08782." evidence="8" ref="2">
    <original>C</original>
    <variation>Y</variation>
    <location>
        <position position="259"/>
    </location>
</feature>
<feature type="sequence conflict" description="In Ref. 2; AAD08782." evidence="8" ref="2">
    <original>K</original>
    <variation>R</variation>
    <location>
        <position position="595"/>
    </location>
</feature>
<keyword id="KW-0025">Alternative splicing</keyword>
<keyword id="KW-0106">Calcium</keyword>
<keyword id="KW-0130">Cell adhesion</keyword>
<keyword id="KW-1003">Cell membrane</keyword>
<keyword id="KW-1015">Disulfide bond</keyword>
<keyword id="KW-0245">EGF-like domain</keyword>
<keyword id="KW-0325">Glycoprotein</keyword>
<keyword id="KW-0401">Integrin</keyword>
<keyword id="KW-0460">Magnesium</keyword>
<keyword id="KW-0472">Membrane</keyword>
<keyword id="KW-0479">Metal-binding</keyword>
<keyword id="KW-0597">Phosphoprotein</keyword>
<keyword id="KW-0675">Receptor</keyword>
<keyword id="KW-1185">Reference proteome</keyword>
<keyword id="KW-0677">Repeat</keyword>
<keyword id="KW-0732">Signal</keyword>
<keyword id="KW-0812">Transmembrane</keyword>
<keyword id="KW-1133">Transmembrane helix</keyword>
<proteinExistence type="evidence at protein level"/>